<protein>
    <recommendedName>
        <fullName evidence="1">Deoxyuridine 5'-triphosphate nucleotidohydrolase</fullName>
        <shortName evidence="1">dUTPase</shortName>
        <ecNumber evidence="1">3.6.1.23</ecNumber>
    </recommendedName>
    <alternativeName>
        <fullName evidence="1">dUTP pyrophosphatase</fullName>
    </alternativeName>
</protein>
<name>DUT_SHEWM</name>
<accession>B1KL07</accession>
<feature type="chain" id="PRO_1000094994" description="Deoxyuridine 5'-triphosphate nucleotidohydrolase">
    <location>
        <begin position="1"/>
        <end position="152"/>
    </location>
</feature>
<feature type="binding site" evidence="1">
    <location>
        <begin position="71"/>
        <end position="73"/>
    </location>
    <ligand>
        <name>substrate</name>
    </ligand>
</feature>
<feature type="binding site" evidence="1">
    <location>
        <position position="84"/>
    </location>
    <ligand>
        <name>substrate</name>
    </ligand>
</feature>
<feature type="binding site" evidence="1">
    <location>
        <begin position="88"/>
        <end position="90"/>
    </location>
    <ligand>
        <name>substrate</name>
    </ligand>
</feature>
<feature type="binding site" evidence="1">
    <location>
        <position position="98"/>
    </location>
    <ligand>
        <name>substrate</name>
    </ligand>
</feature>
<sequence>MKTPIEVKILDSRIGSEYPLPAYATPGSAGMDLRAMIETSLSVAPGETRLIPTGISIHVADPSLAAVILPRSGLGHKHGIVLGNLVGLIDSDYQGPLMVSCWNRGDKPYTIEIGDRLAQLVFVPVVQAEFKLVDEFDNSLRGEGGFGHSGTS</sequence>
<dbReference type="EC" id="3.6.1.23" evidence="1"/>
<dbReference type="EMBL" id="CP000961">
    <property type="protein sequence ID" value="ACA88813.1"/>
    <property type="molecule type" value="Genomic_DNA"/>
</dbReference>
<dbReference type="RefSeq" id="WP_012327138.1">
    <property type="nucleotide sequence ID" value="NC_010506.1"/>
</dbReference>
<dbReference type="SMR" id="B1KL07"/>
<dbReference type="STRING" id="392500.Swoo_4563"/>
<dbReference type="KEGG" id="swd:Swoo_4563"/>
<dbReference type="eggNOG" id="COG0756">
    <property type="taxonomic scope" value="Bacteria"/>
</dbReference>
<dbReference type="HOGENOM" id="CLU_068508_1_1_6"/>
<dbReference type="UniPathway" id="UPA00610">
    <property type="reaction ID" value="UER00666"/>
</dbReference>
<dbReference type="Proteomes" id="UP000002168">
    <property type="component" value="Chromosome"/>
</dbReference>
<dbReference type="GO" id="GO:0004170">
    <property type="term" value="F:dUTP diphosphatase activity"/>
    <property type="evidence" value="ECO:0007669"/>
    <property type="project" value="UniProtKB-UniRule"/>
</dbReference>
<dbReference type="GO" id="GO:0000287">
    <property type="term" value="F:magnesium ion binding"/>
    <property type="evidence" value="ECO:0007669"/>
    <property type="project" value="UniProtKB-UniRule"/>
</dbReference>
<dbReference type="GO" id="GO:0006226">
    <property type="term" value="P:dUMP biosynthetic process"/>
    <property type="evidence" value="ECO:0007669"/>
    <property type="project" value="UniProtKB-UniRule"/>
</dbReference>
<dbReference type="GO" id="GO:0046081">
    <property type="term" value="P:dUTP catabolic process"/>
    <property type="evidence" value="ECO:0007669"/>
    <property type="project" value="InterPro"/>
</dbReference>
<dbReference type="CDD" id="cd07557">
    <property type="entry name" value="trimeric_dUTPase"/>
    <property type="match status" value="1"/>
</dbReference>
<dbReference type="FunFam" id="2.70.40.10:FF:000002">
    <property type="entry name" value="dUTP diphosphatase"/>
    <property type="match status" value="1"/>
</dbReference>
<dbReference type="Gene3D" id="2.70.40.10">
    <property type="match status" value="1"/>
</dbReference>
<dbReference type="HAMAP" id="MF_00116">
    <property type="entry name" value="dUTPase_bact"/>
    <property type="match status" value="1"/>
</dbReference>
<dbReference type="InterPro" id="IPR008181">
    <property type="entry name" value="dUTPase"/>
</dbReference>
<dbReference type="InterPro" id="IPR029054">
    <property type="entry name" value="dUTPase-like"/>
</dbReference>
<dbReference type="InterPro" id="IPR036157">
    <property type="entry name" value="dUTPase-like_sf"/>
</dbReference>
<dbReference type="InterPro" id="IPR033704">
    <property type="entry name" value="dUTPase_trimeric"/>
</dbReference>
<dbReference type="NCBIfam" id="TIGR00576">
    <property type="entry name" value="dut"/>
    <property type="match status" value="1"/>
</dbReference>
<dbReference type="NCBIfam" id="NF001862">
    <property type="entry name" value="PRK00601.1"/>
    <property type="match status" value="1"/>
</dbReference>
<dbReference type="PANTHER" id="PTHR11241">
    <property type="entry name" value="DEOXYURIDINE 5'-TRIPHOSPHATE NUCLEOTIDOHYDROLASE"/>
    <property type="match status" value="1"/>
</dbReference>
<dbReference type="PANTHER" id="PTHR11241:SF0">
    <property type="entry name" value="DEOXYURIDINE 5'-TRIPHOSPHATE NUCLEOTIDOHYDROLASE"/>
    <property type="match status" value="1"/>
</dbReference>
<dbReference type="Pfam" id="PF00692">
    <property type="entry name" value="dUTPase"/>
    <property type="match status" value="1"/>
</dbReference>
<dbReference type="SUPFAM" id="SSF51283">
    <property type="entry name" value="dUTPase-like"/>
    <property type="match status" value="1"/>
</dbReference>
<comment type="function">
    <text evidence="1">This enzyme is involved in nucleotide metabolism: it produces dUMP, the immediate precursor of thymidine nucleotides and it decreases the intracellular concentration of dUTP so that uracil cannot be incorporated into DNA.</text>
</comment>
<comment type="catalytic activity">
    <reaction evidence="1">
        <text>dUTP + H2O = dUMP + diphosphate + H(+)</text>
        <dbReference type="Rhea" id="RHEA:10248"/>
        <dbReference type="ChEBI" id="CHEBI:15377"/>
        <dbReference type="ChEBI" id="CHEBI:15378"/>
        <dbReference type="ChEBI" id="CHEBI:33019"/>
        <dbReference type="ChEBI" id="CHEBI:61555"/>
        <dbReference type="ChEBI" id="CHEBI:246422"/>
        <dbReference type="EC" id="3.6.1.23"/>
    </reaction>
</comment>
<comment type="cofactor">
    <cofactor evidence="1">
        <name>Mg(2+)</name>
        <dbReference type="ChEBI" id="CHEBI:18420"/>
    </cofactor>
</comment>
<comment type="pathway">
    <text evidence="1">Pyrimidine metabolism; dUMP biosynthesis; dUMP from dCTP (dUTP route): step 2/2.</text>
</comment>
<comment type="similarity">
    <text evidence="1">Belongs to the dUTPase family.</text>
</comment>
<keyword id="KW-0378">Hydrolase</keyword>
<keyword id="KW-0460">Magnesium</keyword>
<keyword id="KW-0479">Metal-binding</keyword>
<keyword id="KW-0546">Nucleotide metabolism</keyword>
<keyword id="KW-1185">Reference proteome</keyword>
<evidence type="ECO:0000255" key="1">
    <source>
        <dbReference type="HAMAP-Rule" id="MF_00116"/>
    </source>
</evidence>
<gene>
    <name evidence="1" type="primary">dut</name>
    <name type="ordered locus">Swoo_4563</name>
</gene>
<reference key="1">
    <citation type="submission" date="2008-02" db="EMBL/GenBank/DDBJ databases">
        <title>Complete sequence of Shewanella woodyi ATCC 51908.</title>
        <authorList>
            <consortium name="US DOE Joint Genome Institute"/>
            <person name="Copeland A."/>
            <person name="Lucas S."/>
            <person name="Lapidus A."/>
            <person name="Glavina del Rio T."/>
            <person name="Dalin E."/>
            <person name="Tice H."/>
            <person name="Bruce D."/>
            <person name="Goodwin L."/>
            <person name="Pitluck S."/>
            <person name="Sims D."/>
            <person name="Brettin T."/>
            <person name="Detter J.C."/>
            <person name="Han C."/>
            <person name="Kuske C.R."/>
            <person name="Schmutz J."/>
            <person name="Larimer F."/>
            <person name="Land M."/>
            <person name="Hauser L."/>
            <person name="Kyrpides N."/>
            <person name="Lykidis A."/>
            <person name="Zhao J.-S."/>
            <person name="Richardson P."/>
        </authorList>
    </citation>
    <scope>NUCLEOTIDE SEQUENCE [LARGE SCALE GENOMIC DNA]</scope>
    <source>
        <strain>ATCC 51908 / MS32</strain>
    </source>
</reference>
<proteinExistence type="inferred from homology"/>
<organism>
    <name type="scientific">Shewanella woodyi (strain ATCC 51908 / MS32)</name>
    <dbReference type="NCBI Taxonomy" id="392500"/>
    <lineage>
        <taxon>Bacteria</taxon>
        <taxon>Pseudomonadati</taxon>
        <taxon>Pseudomonadota</taxon>
        <taxon>Gammaproteobacteria</taxon>
        <taxon>Alteromonadales</taxon>
        <taxon>Shewanellaceae</taxon>
        <taxon>Shewanella</taxon>
    </lineage>
</organism>